<comment type="similarity">
    <text evidence="1">Belongs to the UPF0303 family.</text>
</comment>
<sequence length="162" mass="17799">MTIEQDLSRIALQEETLRFDAFDLSTAWVLGKLLHDLASERNLGVAIDITLHSMPVFYIALPGATPDNSNWVRRKRNMVLRYFRSSYASTLRLEKQGKTIEDNGLTGADYAASGGSFPIFVNGTGCIGAVTVSGLPQREDHNLVVEALALTLGHELHNLNLS</sequence>
<proteinExistence type="inferred from homology"/>
<accession>B9JHB0</accession>
<protein>
    <recommendedName>
        <fullName evidence="1">UPF0303 protein Arad_3071</fullName>
    </recommendedName>
</protein>
<organism>
    <name type="scientific">Rhizobium rhizogenes (strain K84 / ATCC BAA-868)</name>
    <name type="common">Agrobacterium radiobacter</name>
    <dbReference type="NCBI Taxonomy" id="311403"/>
    <lineage>
        <taxon>Bacteria</taxon>
        <taxon>Pseudomonadati</taxon>
        <taxon>Pseudomonadota</taxon>
        <taxon>Alphaproteobacteria</taxon>
        <taxon>Hyphomicrobiales</taxon>
        <taxon>Rhizobiaceae</taxon>
        <taxon>Rhizobium/Agrobacterium group</taxon>
        <taxon>Rhizobium</taxon>
    </lineage>
</organism>
<name>Y3071_RHIR8</name>
<evidence type="ECO:0000255" key="1">
    <source>
        <dbReference type="HAMAP-Rule" id="MF_00761"/>
    </source>
</evidence>
<gene>
    <name type="ordered locus">Arad_3071</name>
</gene>
<dbReference type="EMBL" id="CP000628">
    <property type="protein sequence ID" value="ACM27107.1"/>
    <property type="molecule type" value="Genomic_DNA"/>
</dbReference>
<dbReference type="RefSeq" id="WP_012651867.1">
    <property type="nucleotide sequence ID" value="NC_011985.1"/>
</dbReference>
<dbReference type="SMR" id="B9JHB0"/>
<dbReference type="STRING" id="311403.Arad_3071"/>
<dbReference type="KEGG" id="ara:Arad_3071"/>
<dbReference type="eggNOG" id="COG4702">
    <property type="taxonomic scope" value="Bacteria"/>
</dbReference>
<dbReference type="HOGENOM" id="CLU_101036_2_1_5"/>
<dbReference type="Proteomes" id="UP000001600">
    <property type="component" value="Chromosome 1"/>
</dbReference>
<dbReference type="Gene3D" id="3.30.450.150">
    <property type="entry name" value="Haem-degrading domain"/>
    <property type="match status" value="1"/>
</dbReference>
<dbReference type="HAMAP" id="MF_00761">
    <property type="entry name" value="UPF0303"/>
    <property type="match status" value="1"/>
</dbReference>
<dbReference type="InterPro" id="IPR005624">
    <property type="entry name" value="PduO/GlcC-like"/>
</dbReference>
<dbReference type="InterPro" id="IPR038084">
    <property type="entry name" value="PduO/GlcC-like_sf"/>
</dbReference>
<dbReference type="InterPro" id="IPR010371">
    <property type="entry name" value="YBR137W-like"/>
</dbReference>
<dbReference type="NCBIfam" id="NF002696">
    <property type="entry name" value="PRK02487.1-5"/>
    <property type="match status" value="1"/>
</dbReference>
<dbReference type="PANTHER" id="PTHR28255">
    <property type="match status" value="1"/>
</dbReference>
<dbReference type="PANTHER" id="PTHR28255:SF1">
    <property type="entry name" value="UPF0303 PROTEIN YBR137W"/>
    <property type="match status" value="1"/>
</dbReference>
<dbReference type="Pfam" id="PF03928">
    <property type="entry name" value="HbpS-like"/>
    <property type="match status" value="1"/>
</dbReference>
<dbReference type="PIRSF" id="PIRSF008757">
    <property type="entry name" value="UCP008757"/>
    <property type="match status" value="1"/>
</dbReference>
<dbReference type="SUPFAM" id="SSF143744">
    <property type="entry name" value="GlcG-like"/>
    <property type="match status" value="1"/>
</dbReference>
<reference key="1">
    <citation type="journal article" date="2009" name="J. Bacteriol.">
        <title>Genome sequences of three Agrobacterium biovars help elucidate the evolution of multichromosome genomes in bacteria.</title>
        <authorList>
            <person name="Slater S.C."/>
            <person name="Goldman B.S."/>
            <person name="Goodner B."/>
            <person name="Setubal J.C."/>
            <person name="Farrand S.K."/>
            <person name="Nester E.W."/>
            <person name="Burr T.J."/>
            <person name="Banta L."/>
            <person name="Dickerman A.W."/>
            <person name="Paulsen I."/>
            <person name="Otten L."/>
            <person name="Suen G."/>
            <person name="Welch R."/>
            <person name="Almeida N.F."/>
            <person name="Arnold F."/>
            <person name="Burton O.T."/>
            <person name="Du Z."/>
            <person name="Ewing A."/>
            <person name="Godsy E."/>
            <person name="Heisel S."/>
            <person name="Houmiel K.L."/>
            <person name="Jhaveri J."/>
            <person name="Lu J."/>
            <person name="Miller N.M."/>
            <person name="Norton S."/>
            <person name="Chen Q."/>
            <person name="Phoolcharoen W."/>
            <person name="Ohlin V."/>
            <person name="Ondrusek D."/>
            <person name="Pride N."/>
            <person name="Stricklin S.L."/>
            <person name="Sun J."/>
            <person name="Wheeler C."/>
            <person name="Wilson L."/>
            <person name="Zhu H."/>
            <person name="Wood D.W."/>
        </authorList>
    </citation>
    <scope>NUCLEOTIDE SEQUENCE [LARGE SCALE GENOMIC DNA]</scope>
    <source>
        <strain>K84 / ATCC BAA-868</strain>
    </source>
</reference>
<feature type="chain" id="PRO_1000148411" description="UPF0303 protein Arad_3071">
    <location>
        <begin position="1"/>
        <end position="162"/>
    </location>
</feature>